<name>RLMC_ECO5E</name>
<reference key="1">
    <citation type="journal article" date="2011" name="Proc. Natl. Acad. Sci. U.S.A.">
        <title>Genomic anatomy of Escherichia coli O157:H7 outbreaks.</title>
        <authorList>
            <person name="Eppinger M."/>
            <person name="Mammel M.K."/>
            <person name="Leclerc J.E."/>
            <person name="Ravel J."/>
            <person name="Cebula T.A."/>
        </authorList>
    </citation>
    <scope>NUCLEOTIDE SEQUENCE [LARGE SCALE GENOMIC DNA]</scope>
    <source>
        <strain>EC4115 / EHEC</strain>
    </source>
</reference>
<protein>
    <recommendedName>
        <fullName evidence="1">23S rRNA (uracil(747)-C(5))-methyltransferase RlmC</fullName>
        <ecNumber evidence="1">2.1.1.189</ecNumber>
    </recommendedName>
    <alternativeName>
        <fullName evidence="1">23S rRNA(m5U747)-methyltransferase</fullName>
    </alternativeName>
</protein>
<evidence type="ECO:0000255" key="1">
    <source>
        <dbReference type="HAMAP-Rule" id="MF_01012"/>
    </source>
</evidence>
<organism>
    <name type="scientific">Escherichia coli O157:H7 (strain EC4115 / EHEC)</name>
    <dbReference type="NCBI Taxonomy" id="444450"/>
    <lineage>
        <taxon>Bacteria</taxon>
        <taxon>Pseudomonadati</taxon>
        <taxon>Pseudomonadota</taxon>
        <taxon>Gammaproteobacteria</taxon>
        <taxon>Enterobacterales</taxon>
        <taxon>Enterobacteriaceae</taxon>
        <taxon>Escherichia</taxon>
    </lineage>
</organism>
<comment type="function">
    <text evidence="1">Catalyzes the formation of 5-methyl-uridine at position 747 (m5U747) in 23S rRNA.</text>
</comment>
<comment type="catalytic activity">
    <reaction evidence="1">
        <text>uridine(747) in 23S rRNA + S-adenosyl-L-methionine = 5-methyluridine(747) in 23S rRNA + S-adenosyl-L-homocysteine + H(+)</text>
        <dbReference type="Rhea" id="RHEA:42628"/>
        <dbReference type="Rhea" id="RHEA-COMP:10154"/>
        <dbReference type="Rhea" id="RHEA-COMP:10155"/>
        <dbReference type="ChEBI" id="CHEBI:15378"/>
        <dbReference type="ChEBI" id="CHEBI:57856"/>
        <dbReference type="ChEBI" id="CHEBI:59789"/>
        <dbReference type="ChEBI" id="CHEBI:65315"/>
        <dbReference type="ChEBI" id="CHEBI:74447"/>
        <dbReference type="EC" id="2.1.1.189"/>
    </reaction>
</comment>
<comment type="similarity">
    <text evidence="1">Belongs to the class I-like SAM-binding methyltransferase superfamily. RNA M5U methyltransferase family. RlmC subfamily.</text>
</comment>
<keyword id="KW-0004">4Fe-4S</keyword>
<keyword id="KW-0408">Iron</keyword>
<keyword id="KW-0411">Iron-sulfur</keyword>
<keyword id="KW-0479">Metal-binding</keyword>
<keyword id="KW-0489">Methyltransferase</keyword>
<keyword id="KW-0698">rRNA processing</keyword>
<keyword id="KW-0949">S-adenosyl-L-methionine</keyword>
<keyword id="KW-0808">Transferase</keyword>
<proteinExistence type="inferred from homology"/>
<dbReference type="EC" id="2.1.1.189" evidence="1"/>
<dbReference type="EMBL" id="CP001164">
    <property type="protein sequence ID" value="ACI38048.1"/>
    <property type="molecule type" value="Genomic_DNA"/>
</dbReference>
<dbReference type="RefSeq" id="WP_001149719.1">
    <property type="nucleotide sequence ID" value="NC_011353.1"/>
</dbReference>
<dbReference type="SMR" id="B5YSF1"/>
<dbReference type="KEGG" id="ecf:ECH74115_1015"/>
<dbReference type="HOGENOM" id="CLU_014689_0_0_6"/>
<dbReference type="GO" id="GO:0051539">
    <property type="term" value="F:4 iron, 4 sulfur cluster binding"/>
    <property type="evidence" value="ECO:0007669"/>
    <property type="project" value="UniProtKB-KW"/>
</dbReference>
<dbReference type="GO" id="GO:0005506">
    <property type="term" value="F:iron ion binding"/>
    <property type="evidence" value="ECO:0007669"/>
    <property type="project" value="UniProtKB-UniRule"/>
</dbReference>
<dbReference type="GO" id="GO:0070041">
    <property type="term" value="F:rRNA (uridine-C5-)-methyltransferase activity"/>
    <property type="evidence" value="ECO:0007669"/>
    <property type="project" value="UniProtKB-UniRule"/>
</dbReference>
<dbReference type="GO" id="GO:0070475">
    <property type="term" value="P:rRNA base methylation"/>
    <property type="evidence" value="ECO:0007669"/>
    <property type="project" value="TreeGrafter"/>
</dbReference>
<dbReference type="CDD" id="cd02440">
    <property type="entry name" value="AdoMet_MTases"/>
    <property type="match status" value="1"/>
</dbReference>
<dbReference type="FunFam" id="2.40.50.1070:FF:000002">
    <property type="entry name" value="23S rRNA (uracil(747)-C(5))-methyltransferase RlmC"/>
    <property type="match status" value="1"/>
</dbReference>
<dbReference type="FunFam" id="3.40.50.150:FF:000049">
    <property type="entry name" value="23S rRNA (uracil(747)-C(5))-methyltransferase RlmC"/>
    <property type="match status" value="1"/>
</dbReference>
<dbReference type="Gene3D" id="2.40.50.1070">
    <property type="match status" value="1"/>
</dbReference>
<dbReference type="Gene3D" id="3.40.50.150">
    <property type="entry name" value="Vaccinia Virus protein VP39"/>
    <property type="match status" value="1"/>
</dbReference>
<dbReference type="HAMAP" id="MF_01012">
    <property type="entry name" value="23SrRNA_methyltr_RlmC"/>
    <property type="match status" value="1"/>
</dbReference>
<dbReference type="InterPro" id="IPR011825">
    <property type="entry name" value="23SrRNA_MeTrfase_RlmC"/>
</dbReference>
<dbReference type="InterPro" id="IPR030390">
    <property type="entry name" value="MeTrfase_TrmA_AS"/>
</dbReference>
<dbReference type="InterPro" id="IPR030391">
    <property type="entry name" value="MeTrfase_TrmA_CS"/>
</dbReference>
<dbReference type="InterPro" id="IPR029063">
    <property type="entry name" value="SAM-dependent_MTases_sf"/>
</dbReference>
<dbReference type="InterPro" id="IPR010280">
    <property type="entry name" value="U5_MeTrfase_fam"/>
</dbReference>
<dbReference type="NCBIfam" id="TIGR02085">
    <property type="entry name" value="meth_trns_rumB"/>
    <property type="match status" value="1"/>
</dbReference>
<dbReference type="PANTHER" id="PTHR11061">
    <property type="entry name" value="RNA M5U METHYLTRANSFERASE"/>
    <property type="match status" value="1"/>
</dbReference>
<dbReference type="PANTHER" id="PTHR11061:SF30">
    <property type="entry name" value="TRNA (URACIL(54)-C(5))-METHYLTRANSFERASE"/>
    <property type="match status" value="1"/>
</dbReference>
<dbReference type="Pfam" id="PF05958">
    <property type="entry name" value="tRNA_U5-meth_tr"/>
    <property type="match status" value="1"/>
</dbReference>
<dbReference type="SUPFAM" id="SSF53335">
    <property type="entry name" value="S-adenosyl-L-methionine-dependent methyltransferases"/>
    <property type="match status" value="1"/>
</dbReference>
<dbReference type="PROSITE" id="PS51687">
    <property type="entry name" value="SAM_MT_RNA_M5U"/>
    <property type="match status" value="1"/>
</dbReference>
<dbReference type="PROSITE" id="PS01230">
    <property type="entry name" value="TRMA_1"/>
    <property type="match status" value="1"/>
</dbReference>
<dbReference type="PROSITE" id="PS01231">
    <property type="entry name" value="TRMA_2"/>
    <property type="match status" value="1"/>
</dbReference>
<gene>
    <name evidence="1" type="primary">rlmC</name>
    <name type="synonym">rumB</name>
    <name type="ordered locus">ECH74115_1015</name>
</gene>
<accession>B5YSF1</accession>
<feature type="chain" id="PRO_1000200866" description="23S rRNA (uracil(747)-C(5))-methyltransferase RlmC">
    <location>
        <begin position="1"/>
        <end position="375"/>
    </location>
</feature>
<feature type="active site" description="Nucleophile" evidence="1">
    <location>
        <position position="334"/>
    </location>
</feature>
<feature type="binding site" evidence="1">
    <location>
        <position position="3"/>
    </location>
    <ligand>
        <name>[4Fe-4S] cluster</name>
        <dbReference type="ChEBI" id="CHEBI:49883"/>
    </ligand>
</feature>
<feature type="binding site" evidence="1">
    <location>
        <position position="11"/>
    </location>
    <ligand>
        <name>[4Fe-4S] cluster</name>
        <dbReference type="ChEBI" id="CHEBI:49883"/>
    </ligand>
</feature>
<feature type="binding site" evidence="1">
    <location>
        <position position="14"/>
    </location>
    <ligand>
        <name>[4Fe-4S] cluster</name>
        <dbReference type="ChEBI" id="CHEBI:49883"/>
    </ligand>
</feature>
<feature type="binding site" evidence="1">
    <location>
        <position position="87"/>
    </location>
    <ligand>
        <name>[4Fe-4S] cluster</name>
        <dbReference type="ChEBI" id="CHEBI:49883"/>
    </ligand>
</feature>
<feature type="binding site" evidence="1">
    <location>
        <position position="212"/>
    </location>
    <ligand>
        <name>S-adenosyl-L-methionine</name>
        <dbReference type="ChEBI" id="CHEBI:59789"/>
    </ligand>
</feature>
<feature type="binding site" evidence="1">
    <location>
        <position position="241"/>
    </location>
    <ligand>
        <name>S-adenosyl-L-methionine</name>
        <dbReference type="ChEBI" id="CHEBI:59789"/>
    </ligand>
</feature>
<feature type="binding site" evidence="1">
    <location>
        <position position="262"/>
    </location>
    <ligand>
        <name>S-adenosyl-L-methionine</name>
        <dbReference type="ChEBI" id="CHEBI:59789"/>
    </ligand>
</feature>
<feature type="binding site" evidence="1">
    <location>
        <position position="307"/>
    </location>
    <ligand>
        <name>S-adenosyl-L-methionine</name>
        <dbReference type="ChEBI" id="CHEBI:59789"/>
    </ligand>
</feature>
<sequence>MQCALYDAGRCRSCQWITQPIPEQLSAKTADLKNLLADFPVEEWCAPVSGPEQGFRNKAKMVVSGSVEKPLLGMLHRDGTPEDLCDCPLYPASFAPVFAALKPFIARAGLTPYNVARKRGELKYILLTESQSDGGMMLRFVLRSETKLAQLRKALPWLQAQLPQLKVITVNIQPVHMAIMEGETEIYLTEQQALVERFNDVPLWIRPQSFFQTNPAVASQLYATARDWVRQLPVKHMWDLFCGVGGFGLHCATPDMQLTGIEIALEAIACAKQSAAELGLTRLQFQALDSTQFATAQGEVPELVLVNPPRRGIGKPLCDYLSTMAPRFIIYSSCNAQTMAKDIRELPGYRIERVQLFDMFPHTAHYEVLTLLVKM</sequence>